<organism>
    <name type="scientific">Aipysurus laevis</name>
    <name type="common">Olive sea snake</name>
    <dbReference type="NCBI Taxonomy" id="8678"/>
    <lineage>
        <taxon>Eukaryota</taxon>
        <taxon>Metazoa</taxon>
        <taxon>Chordata</taxon>
        <taxon>Craniata</taxon>
        <taxon>Vertebrata</taxon>
        <taxon>Euteleostomi</taxon>
        <taxon>Lepidosauria</taxon>
        <taxon>Squamata</taxon>
        <taxon>Bifurcata</taxon>
        <taxon>Unidentata</taxon>
        <taxon>Episquamata</taxon>
        <taxon>Toxicofera</taxon>
        <taxon>Serpentes</taxon>
        <taxon>Colubroidea</taxon>
        <taxon>Elapidae</taxon>
        <taxon>Hydrophiinae</taxon>
        <taxon>Aipysurus</taxon>
    </lineage>
</organism>
<feature type="signal peptide" evidence="3">
    <location>
        <begin position="1"/>
        <end position="21"/>
    </location>
</feature>
<feature type="chain" id="PRO_0000035433" description="Short neurotoxin B" evidence="3">
    <location>
        <begin position="22"/>
        <end position="81"/>
    </location>
</feature>
<feature type="disulfide bond" evidence="1">
    <location>
        <begin position="24"/>
        <end position="43"/>
    </location>
</feature>
<feature type="disulfide bond" evidence="1">
    <location>
        <begin position="38"/>
        <end position="60"/>
    </location>
</feature>
<feature type="disulfide bond" evidence="1">
    <location>
        <begin position="62"/>
        <end position="73"/>
    </location>
</feature>
<feature type="disulfide bond" evidence="1">
    <location>
        <begin position="74"/>
        <end position="79"/>
    </location>
</feature>
<name>3S12_AIPLA</name>
<dbReference type="EMBL" id="X13373">
    <property type="protein sequence ID" value="CAA31748.1"/>
    <property type="molecule type" value="mRNA"/>
</dbReference>
<dbReference type="PIR" id="A34019">
    <property type="entry name" value="A34019"/>
</dbReference>
<dbReference type="SMR" id="P19959"/>
<dbReference type="GO" id="GO:0005576">
    <property type="term" value="C:extracellular region"/>
    <property type="evidence" value="ECO:0007669"/>
    <property type="project" value="UniProtKB-SubCell"/>
</dbReference>
<dbReference type="GO" id="GO:0030550">
    <property type="term" value="F:acetylcholine receptor inhibitor activity"/>
    <property type="evidence" value="ECO:0007669"/>
    <property type="project" value="UniProtKB-KW"/>
</dbReference>
<dbReference type="GO" id="GO:0099106">
    <property type="term" value="F:ion channel regulator activity"/>
    <property type="evidence" value="ECO:0007669"/>
    <property type="project" value="UniProtKB-KW"/>
</dbReference>
<dbReference type="GO" id="GO:0090729">
    <property type="term" value="F:toxin activity"/>
    <property type="evidence" value="ECO:0007669"/>
    <property type="project" value="UniProtKB-KW"/>
</dbReference>
<dbReference type="CDD" id="cd00206">
    <property type="entry name" value="TFP_snake_toxin"/>
    <property type="match status" value="1"/>
</dbReference>
<dbReference type="FunFam" id="2.10.60.10:FF:000024">
    <property type="entry name" value="Cytotoxin 1"/>
    <property type="match status" value="1"/>
</dbReference>
<dbReference type="Gene3D" id="2.10.60.10">
    <property type="entry name" value="CD59"/>
    <property type="match status" value="1"/>
</dbReference>
<dbReference type="InterPro" id="IPR003571">
    <property type="entry name" value="Snake_3FTx"/>
</dbReference>
<dbReference type="InterPro" id="IPR045860">
    <property type="entry name" value="Snake_toxin-like_sf"/>
</dbReference>
<dbReference type="InterPro" id="IPR018354">
    <property type="entry name" value="Snake_toxin_con_site"/>
</dbReference>
<dbReference type="InterPro" id="IPR054131">
    <property type="entry name" value="Toxin_cobra-type"/>
</dbReference>
<dbReference type="Pfam" id="PF21947">
    <property type="entry name" value="Toxin_cobra-type"/>
    <property type="match status" value="1"/>
</dbReference>
<dbReference type="SUPFAM" id="SSF57302">
    <property type="entry name" value="Snake toxin-like"/>
    <property type="match status" value="1"/>
</dbReference>
<dbReference type="PROSITE" id="PS00272">
    <property type="entry name" value="SNAKE_TOXIN"/>
    <property type="match status" value="1"/>
</dbReference>
<accession>P19959</accession>
<accession>P01439</accession>
<protein>
    <recommendedName>
        <fullName>Short neurotoxin B</fullName>
    </recommendedName>
</protein>
<proteinExistence type="evidence at protein level"/>
<keyword id="KW-0008">Acetylcholine receptor inhibiting toxin</keyword>
<keyword id="KW-0903">Direct protein sequencing</keyword>
<keyword id="KW-1015">Disulfide bond</keyword>
<keyword id="KW-0872">Ion channel impairing toxin</keyword>
<keyword id="KW-0528">Neurotoxin</keyword>
<keyword id="KW-0629">Postsynaptic neurotoxin</keyword>
<keyword id="KW-0964">Secreted</keyword>
<keyword id="KW-0732">Signal</keyword>
<keyword id="KW-0800">Toxin</keyword>
<evidence type="ECO:0000250" key="1">
    <source>
        <dbReference type="UniProtKB" id="P0C1Z0"/>
    </source>
</evidence>
<evidence type="ECO:0000250" key="2">
    <source>
        <dbReference type="UniProtKB" id="P60775"/>
    </source>
</evidence>
<evidence type="ECO:0000269" key="3">
    <source>
    </source>
</evidence>
<evidence type="ECO:0000305" key="4"/>
<reference key="1">
    <citation type="journal article" date="1990" name="Toxicon">
        <title>Nucleotide sequence and structure analysis of cDNAs encoding short-chain neurotoxins from venom glands of a sea snake (Aipysurus laevis).</title>
        <authorList>
            <person name="Ducancel F."/>
            <person name="Guignery-Frelat G."/>
            <person name="Boulain J.-C."/>
            <person name="Menez A."/>
        </authorList>
    </citation>
    <scope>NUCLEOTIDE SEQUENCE [MRNA]</scope>
    <source>
        <tissue>Venom gland</tissue>
    </source>
</reference>
<reference key="2">
    <citation type="journal article" date="1976" name="Biochem. J.">
        <title>Isolation, properties and amino acid sequences of three neurotoxins from the venom of a sea snake, Aipysurus laevis.</title>
        <authorList>
            <person name="Maeda N."/>
            <person name="Tamiya N."/>
        </authorList>
    </citation>
    <scope>PROTEIN SEQUENCE OF 22-81</scope>
    <scope>SUBCELLULAR LOCATION</scope>
    <source>
        <tissue>Venom</tissue>
    </source>
</reference>
<sequence>MKTLLLTLVVVTIVCLDLGYTLTCCNQQSSQPKTTTDCADNSCYKMTWRDHRGTRIERGCGCPQVKPGIKLECCKTNECNN</sequence>
<comment type="function">
    <text evidence="2">Binds to muscle nicotinic acetylcholine receptor (nAChR) and inhibit acetylcholine from binding to the receptor, thereby impairing neuromuscular transmission.</text>
</comment>
<comment type="subcellular location">
    <subcellularLocation>
        <location evidence="3">Secreted</location>
    </subcellularLocation>
</comment>
<comment type="tissue specificity">
    <text evidence="4">Expressed by the venom gland.</text>
</comment>
<comment type="toxic dose">
    <text>LD(50) is 0.067 mg/kg by intramuscular injection into mice.</text>
</comment>
<comment type="similarity">
    <text evidence="4">Belongs to the three-finger toxin family. Short-chain subfamily. Type I alpha-neurotoxin sub-subfamily.</text>
</comment>